<comment type="function">
    <text evidence="1">Mediates visceral muscle contractile activity (myotropic activity).</text>
</comment>
<comment type="subcellular location">
    <subcellularLocation>
        <location>Secreted</location>
    </subcellularLocation>
</comment>
<comment type="mass spectrometry" mass="1008.63" method="MALDI" evidence="3"/>
<comment type="similarity">
    <text evidence="2">Belongs to the periviscerokinin family.</text>
</comment>
<accession>P85044</accession>
<sequence length="9" mass="1009">PALIPFPRV</sequence>
<protein>
    <recommendedName>
        <fullName>Periviscerokinin</fullName>
    </recommendedName>
</protein>
<evidence type="ECO:0000250" key="1">
    <source>
        <dbReference type="UniProtKB" id="P83931"/>
    </source>
</evidence>
<evidence type="ECO:0000255" key="2"/>
<evidence type="ECO:0000269" key="3">
    <source>
    </source>
</evidence>
<evidence type="ECO:0000305" key="4"/>
<feature type="peptide" id="PRO_0000271183" description="Periviscerokinin" evidence="3">
    <location>
        <begin position="1"/>
        <end position="9"/>
    </location>
</feature>
<feature type="modified residue" description="Valine amide" evidence="3">
    <location>
        <position position="9"/>
    </location>
</feature>
<reference evidence="4" key="1">
    <citation type="journal article" date="2005" name="Biochem. Biophys. Res. Commun.">
        <title>Identification of tick periviscerokinin, the first neurohormone of Ixodidae: single cell analysis by means of MALDI-TOF/TOF mass spectrometry.</title>
        <authorList>
            <person name="Neupert S."/>
            <person name="Predel R."/>
            <person name="Russell W.K."/>
            <person name="Davies R."/>
            <person name="Pietrantonio P.V."/>
            <person name="Nachman R.J."/>
        </authorList>
    </citation>
    <scope>PROTEIN SEQUENCE</scope>
    <scope>AMIDATION AT VAL-9</scope>
    <scope>MASS SPECTROMETRY</scope>
    <source>
        <tissue evidence="3">Neurosecretory cell</tissue>
    </source>
</reference>
<name>PVK_RHIMP</name>
<dbReference type="GO" id="GO:0005576">
    <property type="term" value="C:extracellular region"/>
    <property type="evidence" value="ECO:0000250"/>
    <property type="project" value="UniProtKB"/>
</dbReference>
<dbReference type="GO" id="GO:0007218">
    <property type="term" value="P:neuropeptide signaling pathway"/>
    <property type="evidence" value="ECO:0007669"/>
    <property type="project" value="UniProtKB-KW"/>
</dbReference>
<dbReference type="GO" id="GO:0006940">
    <property type="term" value="P:regulation of smooth muscle contraction"/>
    <property type="evidence" value="ECO:0000250"/>
    <property type="project" value="UniProtKB"/>
</dbReference>
<organism>
    <name type="scientific">Rhipicephalus microplus</name>
    <name type="common">Cattle tick</name>
    <name type="synonym">Boophilus microplus</name>
    <dbReference type="NCBI Taxonomy" id="6941"/>
    <lineage>
        <taxon>Eukaryota</taxon>
        <taxon>Metazoa</taxon>
        <taxon>Ecdysozoa</taxon>
        <taxon>Arthropoda</taxon>
        <taxon>Chelicerata</taxon>
        <taxon>Arachnida</taxon>
        <taxon>Acari</taxon>
        <taxon>Parasitiformes</taxon>
        <taxon>Ixodida</taxon>
        <taxon>Ixodoidea</taxon>
        <taxon>Ixodidae</taxon>
        <taxon>Rhipicephalinae</taxon>
        <taxon>Rhipicephalus</taxon>
        <taxon>Boophilus</taxon>
    </lineage>
</organism>
<keyword id="KW-0027">Amidation</keyword>
<keyword id="KW-0903">Direct protein sequencing</keyword>
<keyword id="KW-0527">Neuropeptide</keyword>
<keyword id="KW-0964">Secreted</keyword>
<proteinExistence type="evidence at protein level"/>